<reference key="1">
    <citation type="journal article" date="2008" name="Genome Res.">
        <title>Comparative genome analysis of Salmonella enteritidis PT4 and Salmonella gallinarum 287/91 provides insights into evolutionary and host adaptation pathways.</title>
        <authorList>
            <person name="Thomson N.R."/>
            <person name="Clayton D.J."/>
            <person name="Windhorst D."/>
            <person name="Vernikos G."/>
            <person name="Davidson S."/>
            <person name="Churcher C."/>
            <person name="Quail M.A."/>
            <person name="Stevens M."/>
            <person name="Jones M.A."/>
            <person name="Watson M."/>
            <person name="Barron A."/>
            <person name="Layton A."/>
            <person name="Pickard D."/>
            <person name="Kingsley R.A."/>
            <person name="Bignell A."/>
            <person name="Clark L."/>
            <person name="Harris B."/>
            <person name="Ormond D."/>
            <person name="Abdellah Z."/>
            <person name="Brooks K."/>
            <person name="Cherevach I."/>
            <person name="Chillingworth T."/>
            <person name="Woodward J."/>
            <person name="Norberczak H."/>
            <person name="Lord A."/>
            <person name="Arrowsmith C."/>
            <person name="Jagels K."/>
            <person name="Moule S."/>
            <person name="Mungall K."/>
            <person name="Saunders M."/>
            <person name="Whitehead S."/>
            <person name="Chabalgoity J.A."/>
            <person name="Maskell D."/>
            <person name="Humphreys T."/>
            <person name="Roberts M."/>
            <person name="Barrow P.A."/>
            <person name="Dougan G."/>
            <person name="Parkhill J."/>
        </authorList>
    </citation>
    <scope>NUCLEOTIDE SEQUENCE [LARGE SCALE GENOMIC DNA]</scope>
    <source>
        <strain>287/91 / NCTC 13346</strain>
    </source>
</reference>
<evidence type="ECO:0000255" key="1">
    <source>
        <dbReference type="HAMAP-Rule" id="MF_01365"/>
    </source>
</evidence>
<evidence type="ECO:0000305" key="2"/>
<protein>
    <recommendedName>
        <fullName evidence="1">Large ribosomal subunit protein uL6</fullName>
    </recommendedName>
    <alternativeName>
        <fullName evidence="2">50S ribosomal protein L6</fullName>
    </alternativeName>
</protein>
<keyword id="KW-0687">Ribonucleoprotein</keyword>
<keyword id="KW-0689">Ribosomal protein</keyword>
<keyword id="KW-0694">RNA-binding</keyword>
<keyword id="KW-0699">rRNA-binding</keyword>
<name>RL6_SALG2</name>
<comment type="function">
    <text evidence="1">This protein binds to the 23S rRNA, and is important in its secondary structure. It is located near the subunit interface in the base of the L7/L12 stalk, and near the tRNA binding site of the peptidyltransferase center.</text>
</comment>
<comment type="subunit">
    <text evidence="1">Part of the 50S ribosomal subunit.</text>
</comment>
<comment type="similarity">
    <text evidence="1">Belongs to the universal ribosomal protein uL6 family.</text>
</comment>
<gene>
    <name evidence="1" type="primary">rplF</name>
    <name type="ordered locus">SG4014</name>
</gene>
<organism>
    <name type="scientific">Salmonella gallinarum (strain 287/91 / NCTC 13346)</name>
    <dbReference type="NCBI Taxonomy" id="550538"/>
    <lineage>
        <taxon>Bacteria</taxon>
        <taxon>Pseudomonadati</taxon>
        <taxon>Pseudomonadota</taxon>
        <taxon>Gammaproteobacteria</taxon>
        <taxon>Enterobacterales</taxon>
        <taxon>Enterobacteriaceae</taxon>
        <taxon>Salmonella</taxon>
    </lineage>
</organism>
<proteinExistence type="inferred from homology"/>
<accession>B5RH30</accession>
<feature type="chain" id="PRO_1000144043" description="Large ribosomal subunit protein uL6">
    <location>
        <begin position="1"/>
        <end position="177"/>
    </location>
</feature>
<dbReference type="EMBL" id="AM933173">
    <property type="protein sequence ID" value="CAR39784.1"/>
    <property type="molecule type" value="Genomic_DNA"/>
</dbReference>
<dbReference type="RefSeq" id="WP_000091939.1">
    <property type="nucleotide sequence ID" value="NC_011274.1"/>
</dbReference>
<dbReference type="SMR" id="B5RH30"/>
<dbReference type="KEGG" id="seg:SG4014"/>
<dbReference type="HOGENOM" id="CLU_065464_1_2_6"/>
<dbReference type="Proteomes" id="UP000008321">
    <property type="component" value="Chromosome"/>
</dbReference>
<dbReference type="GO" id="GO:0022625">
    <property type="term" value="C:cytosolic large ribosomal subunit"/>
    <property type="evidence" value="ECO:0007669"/>
    <property type="project" value="TreeGrafter"/>
</dbReference>
<dbReference type="GO" id="GO:0019843">
    <property type="term" value="F:rRNA binding"/>
    <property type="evidence" value="ECO:0007669"/>
    <property type="project" value="UniProtKB-UniRule"/>
</dbReference>
<dbReference type="GO" id="GO:0003735">
    <property type="term" value="F:structural constituent of ribosome"/>
    <property type="evidence" value="ECO:0007669"/>
    <property type="project" value="InterPro"/>
</dbReference>
<dbReference type="GO" id="GO:0002181">
    <property type="term" value="P:cytoplasmic translation"/>
    <property type="evidence" value="ECO:0007669"/>
    <property type="project" value="TreeGrafter"/>
</dbReference>
<dbReference type="FunFam" id="3.90.930.12:FF:000001">
    <property type="entry name" value="50S ribosomal protein L6"/>
    <property type="match status" value="1"/>
</dbReference>
<dbReference type="FunFam" id="3.90.930.12:FF:000002">
    <property type="entry name" value="50S ribosomal protein L6"/>
    <property type="match status" value="1"/>
</dbReference>
<dbReference type="Gene3D" id="3.90.930.12">
    <property type="entry name" value="Ribosomal protein L6, alpha-beta domain"/>
    <property type="match status" value="2"/>
</dbReference>
<dbReference type="HAMAP" id="MF_01365_B">
    <property type="entry name" value="Ribosomal_uL6_B"/>
    <property type="match status" value="1"/>
</dbReference>
<dbReference type="InterPro" id="IPR000702">
    <property type="entry name" value="Ribosomal_uL6-like"/>
</dbReference>
<dbReference type="InterPro" id="IPR036789">
    <property type="entry name" value="Ribosomal_uL6-like_a/b-dom_sf"/>
</dbReference>
<dbReference type="InterPro" id="IPR020040">
    <property type="entry name" value="Ribosomal_uL6_a/b-dom"/>
</dbReference>
<dbReference type="InterPro" id="IPR019906">
    <property type="entry name" value="Ribosomal_uL6_bac-type"/>
</dbReference>
<dbReference type="InterPro" id="IPR002358">
    <property type="entry name" value="Ribosomal_uL6_CS"/>
</dbReference>
<dbReference type="NCBIfam" id="TIGR03654">
    <property type="entry name" value="L6_bact"/>
    <property type="match status" value="1"/>
</dbReference>
<dbReference type="PANTHER" id="PTHR11655">
    <property type="entry name" value="60S/50S RIBOSOMAL PROTEIN L6/L9"/>
    <property type="match status" value="1"/>
</dbReference>
<dbReference type="PANTHER" id="PTHR11655:SF14">
    <property type="entry name" value="LARGE RIBOSOMAL SUBUNIT PROTEIN UL6M"/>
    <property type="match status" value="1"/>
</dbReference>
<dbReference type="Pfam" id="PF00347">
    <property type="entry name" value="Ribosomal_L6"/>
    <property type="match status" value="2"/>
</dbReference>
<dbReference type="PIRSF" id="PIRSF002162">
    <property type="entry name" value="Ribosomal_L6"/>
    <property type="match status" value="1"/>
</dbReference>
<dbReference type="PRINTS" id="PR00059">
    <property type="entry name" value="RIBOSOMALL6"/>
</dbReference>
<dbReference type="SUPFAM" id="SSF56053">
    <property type="entry name" value="Ribosomal protein L6"/>
    <property type="match status" value="2"/>
</dbReference>
<dbReference type="PROSITE" id="PS00525">
    <property type="entry name" value="RIBOSOMAL_L6_1"/>
    <property type="match status" value="1"/>
</dbReference>
<sequence length="177" mass="18860">MSRVAKAPVVVPAGVDVKINGQVITIKGKNGELTRTLNDAVEVKHADNALTFGPRDGYADGWAQAGTARALLNSMVIGVTEGFTKKLQLVGVGYRAAVKGNVVNLSLGFSHPVDHQLPAGITAECPTQTEIVLKGADKQVIGQVAADLRAYRRPEPYKGKGVRYADEVVRTKEAKKK</sequence>